<keyword id="KW-0025">Alternative splicing</keyword>
<keyword id="KW-0156">Chromatin regulator</keyword>
<keyword id="KW-0158">Chromosome</keyword>
<keyword id="KW-0539">Nucleus</keyword>
<keyword id="KW-1185">Reference proteome</keyword>
<keyword id="KW-0804">Transcription</keyword>
<keyword id="KW-0805">Transcription regulation</keyword>
<protein>
    <recommendedName>
        <fullName evidence="16">Chromobox protein homolog hpl-2</fullName>
    </recommendedName>
    <alternativeName>
        <fullName evidence="20">HP1-like heterochromatin protein 2</fullName>
    </alternativeName>
</protein>
<organism evidence="19">
    <name type="scientific">Caenorhabditis elegans</name>
    <dbReference type="NCBI Taxonomy" id="6239"/>
    <lineage>
        <taxon>Eukaryota</taxon>
        <taxon>Metazoa</taxon>
        <taxon>Ecdysozoa</taxon>
        <taxon>Nematoda</taxon>
        <taxon>Chromadorea</taxon>
        <taxon>Rhabditida</taxon>
        <taxon>Rhabditina</taxon>
        <taxon>Rhabditomorpha</taxon>
        <taxon>Rhabditoidea</taxon>
        <taxon>Rhabditidae</taxon>
        <taxon>Peloderinae</taxon>
        <taxon>Caenorhabditis</taxon>
    </lineage>
</organism>
<accession>G5EDE2</accession>
<accession>G5EFS9</accession>
<accession>Q9U3C6</accession>
<reference evidence="17 18" key="1">
    <citation type="submission" date="1999-01" db="EMBL/GenBank/DDBJ databases">
        <title>A novel chromo-domain protein in Caenorhabditis elegans.</title>
        <authorList>
            <person name="Bahrami M."/>
            <person name="Schulze E."/>
        </authorList>
    </citation>
    <scope>NUCLEOTIDE SEQUENCE [MRNA] (ISOFORMS A AND B)</scope>
    <source>
        <strain evidence="17">Bristol N2</strain>
    </source>
</reference>
<reference evidence="19" key="2">
    <citation type="journal article" date="1998" name="Science">
        <title>Genome sequence of the nematode C. elegans: a platform for investigating biology.</title>
        <authorList>
            <consortium name="The C. elegans sequencing consortium"/>
        </authorList>
    </citation>
    <scope>NUCLEOTIDE SEQUENCE [LARGE SCALE GENOMIC DNA]</scope>
    <source>
        <strain evidence="19">Bristol N2</strain>
    </source>
</reference>
<reference evidence="16" key="3">
    <citation type="journal article" date="2002" name="EMBO Rep.">
        <title>A heterochromatin protein 1 homologue in Caenorhabditis elegans acts in germline and vulval development.</title>
        <authorList>
            <person name="Couteau F."/>
            <person name="Guerry F."/>
            <person name="Muller F."/>
            <person name="Palladino F."/>
        </authorList>
    </citation>
    <scope>FUNCTION</scope>
    <scope>SUBCELLULAR LOCATION</scope>
    <scope>DEVELOPMENTAL STAGE</scope>
    <scope>DISRUPTION PHENOTYPE</scope>
</reference>
<reference evidence="16" key="4">
    <citation type="journal article" date="2006" name="Dev. Biol.">
        <title>The C. elegans HP1 homologue HPL-2 and the LIN-13 zinc finger protein form a complex implicated in vulval development.</title>
        <authorList>
            <person name="Coustham V."/>
            <person name="Bedet C."/>
            <person name="Monier K."/>
            <person name="Schott S."/>
            <person name="Karali M."/>
            <person name="Palladino F."/>
        </authorList>
    </citation>
    <scope>FUNCTION</scope>
    <scope>SUBUNIT(ISOFORM A)</scope>
    <scope>INTERACTION WITH LIN-13</scope>
    <scope>SUBCELLULAR LOCATION</scope>
    <scope>DISRUPTION PHENOTYPE</scope>
</reference>
<reference evidence="16" key="5">
    <citation type="journal article" date="2006" name="Dev. Biol.">
        <title>Unique and redundant functions of C. elegans HP1 proteins in post-embryonic development.</title>
        <authorList>
            <person name="Schott S."/>
            <person name="Coustham V."/>
            <person name="Simonet T."/>
            <person name="Bedet C."/>
            <person name="Palladino F."/>
        </authorList>
    </citation>
    <scope>FUNCTION</scope>
    <scope>SUBCELLULAR LOCATION</scope>
    <scope>DEVELOPMENTAL STAGE</scope>
    <scope>DISRUPTION PHENOTYPE</scope>
</reference>
<reference evidence="16" key="6">
    <citation type="journal article" date="2007" name="Dev. Biol.">
        <title>Antagonistic functions of SET-2/SET1 and HPL/HP1 proteins in C. elegans development.</title>
        <authorList>
            <person name="Simonet T."/>
            <person name="Dulermo R."/>
            <person name="Schott S."/>
            <person name="Palladino F."/>
        </authorList>
    </citation>
    <scope>FUNCTION</scope>
    <scope>DISRUPTION PHENOTYPE</scope>
</reference>
<reference evidence="16" key="7">
    <citation type="journal article" date="2009" name="Genetics">
        <title>HPL-2/HP1 prevents inappropriate vulval induction in Caenorhabditis elegans by acting in both HYP7 and vulval precursor cells.</title>
        <authorList>
            <person name="Schott S."/>
            <person name="Ramos F."/>
            <person name="Coustham V."/>
            <person name="Palladino F."/>
        </authorList>
    </citation>
    <scope>FUNCTION</scope>
</reference>
<reference evidence="16" key="8">
    <citation type="journal article" date="2011" name="Genome Biol.">
        <title>Caenorhabditis elegans Heterochromatin protein 1 (HPL-2) links developmental plasticity, longevity and lipid metabolism.</title>
        <authorList>
            <person name="Meister P."/>
            <person name="Schott S."/>
            <person name="Bedet C."/>
            <person name="Xiao Y."/>
            <person name="Rohner S."/>
            <person name="Bodennec S."/>
            <person name="Hudry B."/>
            <person name="Molin L."/>
            <person name="Solari F."/>
            <person name="Gasser S.M."/>
            <person name="Palladino F."/>
        </authorList>
    </citation>
    <scope>FUNCTION</scope>
</reference>
<reference evidence="16" key="9">
    <citation type="journal article" date="2012" name="Mol. Cell. Biol.">
        <title>Novel roles of Caenorhabditis elegans heterochromatin protein HP1 and linker histone in the regulation of innate immune gene expression.</title>
        <authorList>
            <person name="Studencka M."/>
            <person name="Konzer A."/>
            <person name="Moneron G."/>
            <person name="Wenzel D."/>
            <person name="Opitz L."/>
            <person name="Salinas-Riester G."/>
            <person name="Bedet C."/>
            <person name="Krueger M."/>
            <person name="Hell S.W."/>
            <person name="Wisniewski J.R."/>
            <person name="Schmidt H."/>
            <person name="Palladino F."/>
            <person name="Schulze E."/>
            <person name="Jedrusik-Bode M."/>
        </authorList>
    </citation>
    <scope>FUNCTION</scope>
    <scope>INTERACTION WITH HIS-24 AND HPL-1</scope>
</reference>
<reference evidence="16" key="10">
    <citation type="journal article" date="2012" name="PLoS Genet.">
        <title>Transcriptional repression of Hox genes by C. elegans HP1/HPL and H1/HIS-24.</title>
        <authorList>
            <person name="Studencka M."/>
            <person name="Wesolowski R."/>
            <person name="Opitz L."/>
            <person name="Salinas-Riester G."/>
            <person name="Wisniewski J.R."/>
            <person name="Jedrusik-Bode M."/>
        </authorList>
    </citation>
    <scope>FUNCTION</scope>
    <scope>INTERACTION WITH HISTONE H3</scope>
    <scope>DISRUPTION PHENOTYPE</scope>
</reference>
<reference evidence="16" key="11">
    <citation type="journal article" date="2014" name="Proc. Natl. Acad. Sci. U.S.A.">
        <title>The Caenorhabditis elegans HP1 family protein HPL-2 maintains ER homeostasis through the UPR and hormesis.</title>
        <authorList>
            <person name="Kozlowski L."/>
            <person name="Garvis S."/>
            <person name="Bedet C."/>
            <person name="Palladino F."/>
        </authorList>
    </citation>
    <scope>FUNCTION</scope>
    <scope>DISRUPTION PHENOTYPE</scope>
</reference>
<reference evidence="16" key="12">
    <citation type="journal article" date="2015" name="Genome Res.">
        <title>Defining heterochromatin in C. elegans through genome-wide analysis of the heterochromatin protein 1 homolog HPL-2.</title>
        <authorList>
            <person name="Garrigues J.M."/>
            <person name="Sidoli S."/>
            <person name="Garcia B.A."/>
            <person name="Strome S."/>
        </authorList>
    </citation>
    <scope>FUNCTION</scope>
    <scope>SUBCELLULAR LOCATION</scope>
</reference>
<reference evidence="16" key="13">
    <citation type="journal article" date="2015" name="Nucleic Acids Res.">
        <title>H3K23me2 is a new heterochromatic mark in Caenorhabditis elegans.</title>
        <authorList>
            <person name="Vandamme J."/>
            <person name="Sidoli S."/>
            <person name="Mariani L."/>
            <person name="Friis C."/>
            <person name="Christensen J."/>
            <person name="Helin K."/>
            <person name="Jensen O.N."/>
            <person name="Salcini A.E."/>
        </authorList>
    </citation>
    <scope>FUNCTION</scope>
    <scope>INTERACTION WITH HISTONE H3</scope>
    <scope>SUBCELLULAR LOCATION</scope>
    <scope>DISRUPTION PHENOTYPE</scope>
</reference>
<reference evidence="16" key="14">
    <citation type="journal article" date="2018" name="Mol. Cell. Biol.">
        <title>The Caenorhabditis elegans Ortholog of TDP-43 Regulates the Chromatin Localization of the Heterochromatin Protein 1 Homolog HPL-2.</title>
        <authorList>
            <person name="Saldi T.K."/>
            <person name="Gonzales P."/>
            <person name="Garrido-Lecca A."/>
            <person name="Dostal V."/>
            <person name="Roberts C.M."/>
            <person name="Petrucelli L."/>
            <person name="Link C.D."/>
        </authorList>
    </citation>
    <scope>FUNCTION</scope>
    <scope>INTERACTION WITH TDP-1</scope>
    <scope>SUBCELLULAR LOCATION</scope>
    <scope>DISRUPTION PHENOTYPE</scope>
</reference>
<gene>
    <name evidence="15 20" type="primary">hpl-2</name>
    <name evidence="18" type="synonym">K01G5.2a</name>
    <name evidence="20" type="ORF">K01G5.2</name>
</gene>
<dbReference type="EMBL" id="AF123573">
    <property type="protein sequence ID" value="AAD21196.1"/>
    <property type="molecule type" value="mRNA"/>
</dbReference>
<dbReference type="EMBL" id="AF123574">
    <property type="protein sequence ID" value="AAD21197.1"/>
    <property type="molecule type" value="mRNA"/>
</dbReference>
<dbReference type="EMBL" id="BX284603">
    <property type="protein sequence ID" value="CAB07241.1"/>
    <property type="molecule type" value="Genomic_DNA"/>
</dbReference>
<dbReference type="EMBL" id="BX284603">
    <property type="protein sequence ID" value="CAB07243.2"/>
    <property type="molecule type" value="Genomic_DNA"/>
</dbReference>
<dbReference type="EMBL" id="BX284603">
    <property type="protein sequence ID" value="CAB54267.2"/>
    <property type="molecule type" value="Genomic_DNA"/>
</dbReference>
<dbReference type="PIR" id="T23196">
    <property type="entry name" value="T23196"/>
</dbReference>
<dbReference type="PIR" id="T23198">
    <property type="entry name" value="T23198"/>
</dbReference>
<dbReference type="PIR" id="T23202">
    <property type="entry name" value="T23202"/>
</dbReference>
<dbReference type="RefSeq" id="NP_001022652.1">
    <molecule id="G5EDE2-1"/>
    <property type="nucleotide sequence ID" value="NM_001027481.5"/>
</dbReference>
<dbReference type="RefSeq" id="NP_001022653.1">
    <molecule id="G5EDE2-2"/>
    <property type="nucleotide sequence ID" value="NM_001027482.4"/>
</dbReference>
<dbReference type="RefSeq" id="NP_001022654.1">
    <molecule id="G5EDE2-3"/>
    <property type="nucleotide sequence ID" value="NM_001027483.3"/>
</dbReference>
<dbReference type="FunCoup" id="G5EDE2">
    <property type="interactions" value="195"/>
</dbReference>
<dbReference type="IntAct" id="G5EDE2">
    <property type="interactions" value="3"/>
</dbReference>
<dbReference type="STRING" id="6239.K01G5.2c.1"/>
<dbReference type="PaxDb" id="6239-K01G5.2c"/>
<dbReference type="PeptideAtlas" id="G5EDE2"/>
<dbReference type="EnsemblMetazoa" id="K01G5.2a.1">
    <molecule id="G5EDE2-1"/>
    <property type="protein sequence ID" value="K01G5.2a.1"/>
    <property type="gene ID" value="WBGene00001996"/>
</dbReference>
<dbReference type="EnsemblMetazoa" id="K01G5.2b.1">
    <molecule id="G5EDE2-2"/>
    <property type="protein sequence ID" value="K01G5.2b.1"/>
    <property type="gene ID" value="WBGene00001996"/>
</dbReference>
<dbReference type="EnsemblMetazoa" id="K01G5.2c.1">
    <molecule id="G5EDE2-3"/>
    <property type="protein sequence ID" value="K01G5.2c.1"/>
    <property type="gene ID" value="WBGene00001996"/>
</dbReference>
<dbReference type="GeneID" id="176506"/>
<dbReference type="KEGG" id="cel:CELE_K01G5.2"/>
<dbReference type="UCSC" id="K01G5.2b">
    <property type="organism name" value="c. elegans"/>
</dbReference>
<dbReference type="AGR" id="WB:WBGene00001996"/>
<dbReference type="CTD" id="176506"/>
<dbReference type="WormBase" id="K01G5.2a">
    <molecule id="G5EDE2-1"/>
    <property type="protein sequence ID" value="CE16191"/>
    <property type="gene ID" value="WBGene00001996"/>
    <property type="gene designation" value="hpl-2"/>
</dbReference>
<dbReference type="WormBase" id="K01G5.2b">
    <molecule id="G5EDE2-2"/>
    <property type="protein sequence ID" value="CE25037"/>
    <property type="gene ID" value="WBGene00001996"/>
    <property type="gene designation" value="hpl-2"/>
</dbReference>
<dbReference type="WormBase" id="K01G5.2c">
    <molecule id="G5EDE2-3"/>
    <property type="protein sequence ID" value="CE25038"/>
    <property type="gene ID" value="WBGene00001996"/>
    <property type="gene designation" value="hpl-2"/>
</dbReference>
<dbReference type="eggNOG" id="KOG1911">
    <property type="taxonomic scope" value="Eukaryota"/>
</dbReference>
<dbReference type="GeneTree" id="ENSGT00970000195943"/>
<dbReference type="HOGENOM" id="CLU_045874_1_2_1"/>
<dbReference type="OMA" id="WKGYADT"/>
<dbReference type="OrthoDB" id="433924at2759"/>
<dbReference type="PhylomeDB" id="G5EDE2"/>
<dbReference type="PRO" id="PR:G5EDE2"/>
<dbReference type="Proteomes" id="UP000001940">
    <property type="component" value="Chromosome III"/>
</dbReference>
<dbReference type="Bgee" id="WBGene00001996">
    <property type="expression patterns" value="Expressed in embryo and 4 other cell types or tissues"/>
</dbReference>
<dbReference type="ExpressionAtlas" id="G5EDE2">
    <property type="expression patterns" value="baseline and differential"/>
</dbReference>
<dbReference type="GO" id="GO:0005694">
    <property type="term" value="C:chromosome"/>
    <property type="evidence" value="ECO:0007669"/>
    <property type="project" value="UniProtKB-SubCell"/>
</dbReference>
<dbReference type="GO" id="GO:0034399">
    <property type="term" value="C:nuclear periphery"/>
    <property type="evidence" value="ECO:0000314"/>
    <property type="project" value="WormBase"/>
</dbReference>
<dbReference type="GO" id="GO:0005634">
    <property type="term" value="C:nucleus"/>
    <property type="evidence" value="ECO:0000314"/>
    <property type="project" value="WormBase"/>
</dbReference>
<dbReference type="GO" id="GO:0003682">
    <property type="term" value="F:chromatin binding"/>
    <property type="evidence" value="ECO:0000314"/>
    <property type="project" value="UniProtKB"/>
</dbReference>
<dbReference type="GO" id="GO:0062072">
    <property type="term" value="F:histone H3K9me2/3 reader activity"/>
    <property type="evidence" value="ECO:0000353"/>
    <property type="project" value="UniProtKB"/>
</dbReference>
<dbReference type="GO" id="GO:0040024">
    <property type="term" value="P:dauer larval development"/>
    <property type="evidence" value="ECO:0000315"/>
    <property type="project" value="UniProtKB"/>
</dbReference>
<dbReference type="GO" id="GO:0008340">
    <property type="term" value="P:determination of adult lifespan"/>
    <property type="evidence" value="ECO:0000315"/>
    <property type="project" value="UniProtKB"/>
</dbReference>
<dbReference type="GO" id="GO:0007281">
    <property type="term" value="P:germ cell development"/>
    <property type="evidence" value="ECO:0000315"/>
    <property type="project" value="WormBase"/>
</dbReference>
<dbReference type="GO" id="GO:0008406">
    <property type="term" value="P:gonad development"/>
    <property type="evidence" value="ECO:0000315"/>
    <property type="project" value="WormBase"/>
</dbReference>
<dbReference type="GO" id="GO:0031507">
    <property type="term" value="P:heterochromatin formation"/>
    <property type="evidence" value="ECO:0000316"/>
    <property type="project" value="UniProtKB"/>
</dbReference>
<dbReference type="GO" id="GO:0010629">
    <property type="term" value="P:negative regulation of gene expression"/>
    <property type="evidence" value="ECO:0000315"/>
    <property type="project" value="UniProtKB"/>
</dbReference>
<dbReference type="GO" id="GO:0046580">
    <property type="term" value="P:negative regulation of Ras protein signal transduction"/>
    <property type="evidence" value="ECO:0000316"/>
    <property type="project" value="WormBase"/>
</dbReference>
<dbReference type="GO" id="GO:0040027">
    <property type="term" value="P:negative regulation of vulval development"/>
    <property type="evidence" value="ECO:0000315"/>
    <property type="project" value="WormBase"/>
</dbReference>
<dbReference type="GO" id="GO:0002119">
    <property type="term" value="P:nematode larval development"/>
    <property type="evidence" value="ECO:0000316"/>
    <property type="project" value="WormBase"/>
</dbReference>
<dbReference type="GO" id="GO:0090597">
    <property type="term" value="P:nematode male tail mating organ morphogenesis"/>
    <property type="evidence" value="ECO:0000316"/>
    <property type="project" value="UniProtKB"/>
</dbReference>
<dbReference type="GO" id="GO:0008355">
    <property type="term" value="P:olfactory learning"/>
    <property type="evidence" value="ECO:0000315"/>
    <property type="project" value="WormBase"/>
</dbReference>
<dbReference type="GO" id="GO:0006644">
    <property type="term" value="P:phospholipid metabolic process"/>
    <property type="evidence" value="ECO:0000315"/>
    <property type="project" value="UniProtKB"/>
</dbReference>
<dbReference type="GO" id="GO:0010628">
    <property type="term" value="P:positive regulation of gene expression"/>
    <property type="evidence" value="ECO:0000315"/>
    <property type="project" value="UniProtKB"/>
</dbReference>
<dbReference type="GO" id="GO:0040010">
    <property type="term" value="P:positive regulation of growth rate"/>
    <property type="evidence" value="ECO:0000315"/>
    <property type="project" value="WormBase"/>
</dbReference>
<dbReference type="GO" id="GO:0045595">
    <property type="term" value="P:regulation of cell differentiation"/>
    <property type="evidence" value="ECO:0000316"/>
    <property type="project" value="WormBase"/>
</dbReference>
<dbReference type="GO" id="GO:0010468">
    <property type="term" value="P:regulation of gene expression"/>
    <property type="evidence" value="ECO:0000315"/>
    <property type="project" value="UniProtKB"/>
</dbReference>
<dbReference type="GO" id="GO:0022414">
    <property type="term" value="P:reproductive process"/>
    <property type="evidence" value="ECO:0000315"/>
    <property type="project" value="WormBase"/>
</dbReference>
<dbReference type="GO" id="GO:0034976">
    <property type="term" value="P:response to endoplasmic reticulum stress"/>
    <property type="evidence" value="ECO:0000315"/>
    <property type="project" value="UniProtKB"/>
</dbReference>
<dbReference type="GO" id="GO:0008380">
    <property type="term" value="P:RNA splicing"/>
    <property type="evidence" value="ECO:0000315"/>
    <property type="project" value="UniProtKB"/>
</dbReference>
<dbReference type="GO" id="GO:0072327">
    <property type="term" value="P:vulval cell fate specification"/>
    <property type="evidence" value="ECO:0000315"/>
    <property type="project" value="UniProtKB"/>
</dbReference>
<dbReference type="CDD" id="cd00034">
    <property type="entry name" value="CSD"/>
    <property type="match status" value="1"/>
</dbReference>
<dbReference type="FunFam" id="2.40.50.40:FF:000007">
    <property type="entry name" value="Chromobox protein homolog 1"/>
    <property type="match status" value="1"/>
</dbReference>
<dbReference type="Gene3D" id="2.40.50.40">
    <property type="match status" value="2"/>
</dbReference>
<dbReference type="InterPro" id="IPR016197">
    <property type="entry name" value="Chromo-like_dom_sf"/>
</dbReference>
<dbReference type="InterPro" id="IPR000953">
    <property type="entry name" value="Chromo/chromo_shadow_dom"/>
</dbReference>
<dbReference type="InterPro" id="IPR017984">
    <property type="entry name" value="Chromo_dom_subgr"/>
</dbReference>
<dbReference type="InterPro" id="IPR023780">
    <property type="entry name" value="Chromo_domain"/>
</dbReference>
<dbReference type="InterPro" id="IPR008251">
    <property type="entry name" value="Chromo_shadow_dom"/>
</dbReference>
<dbReference type="InterPro" id="IPR051219">
    <property type="entry name" value="Heterochromatin_chromo-domain"/>
</dbReference>
<dbReference type="PANTHER" id="PTHR22812">
    <property type="entry name" value="CHROMOBOX PROTEIN"/>
    <property type="match status" value="1"/>
</dbReference>
<dbReference type="Pfam" id="PF00385">
    <property type="entry name" value="Chromo"/>
    <property type="match status" value="1"/>
</dbReference>
<dbReference type="Pfam" id="PF01393">
    <property type="entry name" value="Chromo_shadow"/>
    <property type="match status" value="1"/>
</dbReference>
<dbReference type="PRINTS" id="PR00504">
    <property type="entry name" value="CHROMODOMAIN"/>
</dbReference>
<dbReference type="SMART" id="SM00298">
    <property type="entry name" value="CHROMO"/>
    <property type="match status" value="1"/>
</dbReference>
<dbReference type="SMART" id="SM00300">
    <property type="entry name" value="ChSh"/>
    <property type="match status" value="1"/>
</dbReference>
<dbReference type="SUPFAM" id="SSF54160">
    <property type="entry name" value="Chromo domain-like"/>
    <property type="match status" value="2"/>
</dbReference>
<dbReference type="PROSITE" id="PS50013">
    <property type="entry name" value="CHROMO_2"/>
    <property type="match status" value="1"/>
</dbReference>
<proteinExistence type="evidence at protein level"/>
<sequence length="175" mass="20427">MSSKSTKRAKIEDPKDNVFMVEKVLDKRTGKAGRDEFLIQWQGFPESDSSWEPRENLQCVEMLDEFEREFSKREKPIRKRHSQKPEPSEDQADPEEDKDEKKETNQNDKFSLEGKQLKCIVGLTKGPGELHFLCKFSDDTARLLPAKEVNSRYPSQVIRYYESKLTIQDPKADEL</sequence>
<name>CBXH2_CAEEL</name>
<feature type="chain" id="PRO_0000455643" description="Chromobox protein homolog hpl-2">
    <location>
        <begin position="1"/>
        <end position="175"/>
    </location>
</feature>
<feature type="domain" description="Chromo" evidence="1">
    <location>
        <begin position="19"/>
        <end position="78"/>
    </location>
</feature>
<feature type="domain" description="Chromo 2; shadow subtype" evidence="1">
    <location>
        <begin position="115"/>
        <end position="172"/>
    </location>
</feature>
<feature type="region of interest" description="Disordered" evidence="2">
    <location>
        <begin position="71"/>
        <end position="109"/>
    </location>
</feature>
<feature type="compositionally biased region" description="Acidic residues" evidence="2">
    <location>
        <begin position="88"/>
        <end position="98"/>
    </location>
</feature>
<feature type="compositionally biased region" description="Basic and acidic residues" evidence="2">
    <location>
        <begin position="99"/>
        <end position="109"/>
    </location>
</feature>
<feature type="splice variant" id="VSP_061516" description="In isoform b." evidence="16">
    <original>PSQVIRYYESKLTIQDPKADEL</original>
    <variation>RPFVDAYGEFLKKKMERRHKRISEGKKKRSIEEDDADDEWPEMPPGHRILTTEEHELQRRKESKISQDVEMTEAQTAADMLNDMHMAANGDLLSSFPQDFLEDSGDGEVHEAAILSVFDDNSNSPPPCPIVVDTVPDDDDSLLFPRNS</variation>
    <location>
        <begin position="154"/>
        <end position="175"/>
    </location>
</feature>
<feature type="splice variant" id="VSP_061517" description="In isoform c." evidence="16">
    <original>PSQVIRYYESKLTIQDPKADEL</original>
    <variation>RPFVDAYGEFLKKKMERRHKRISEGKKKRSIEEDDADDEWPEMPPGHRILTTEEHELQRRKESKISQDVEMTEAFQQTAADMLNDMHMAANGDLLSSFPQDFLEDSGDGEVHEAAILSVFDDNSNSPPPCPIVVDTVPDDDDSLLFPRNS</variation>
    <location>
        <begin position="154"/>
        <end position="175"/>
    </location>
</feature>
<evidence type="ECO:0000255" key="1">
    <source>
        <dbReference type="PROSITE-ProRule" id="PRU00053"/>
    </source>
</evidence>
<evidence type="ECO:0000256" key="2">
    <source>
        <dbReference type="SAM" id="MobiDB-lite"/>
    </source>
</evidence>
<evidence type="ECO:0000269" key="3">
    <source>
    </source>
</evidence>
<evidence type="ECO:0000269" key="4">
    <source>
    </source>
</evidence>
<evidence type="ECO:0000269" key="5">
    <source>
    </source>
</evidence>
<evidence type="ECO:0000269" key="6">
    <source>
    </source>
</evidence>
<evidence type="ECO:0000269" key="7">
    <source>
    </source>
</evidence>
<evidence type="ECO:0000269" key="8">
    <source>
    </source>
</evidence>
<evidence type="ECO:0000269" key="9">
    <source>
    </source>
</evidence>
<evidence type="ECO:0000269" key="10">
    <source>
    </source>
</evidence>
<evidence type="ECO:0000269" key="11">
    <source>
    </source>
</evidence>
<evidence type="ECO:0000269" key="12">
    <source>
    </source>
</evidence>
<evidence type="ECO:0000269" key="13">
    <source>
    </source>
</evidence>
<evidence type="ECO:0000269" key="14">
    <source>
    </source>
</evidence>
<evidence type="ECO:0000303" key="15">
    <source>
    </source>
</evidence>
<evidence type="ECO:0000305" key="16"/>
<evidence type="ECO:0000312" key="17">
    <source>
        <dbReference type="EMBL" id="AAD21196.1"/>
    </source>
</evidence>
<evidence type="ECO:0000312" key="18">
    <source>
        <dbReference type="EMBL" id="AAD21197.1"/>
    </source>
</evidence>
<evidence type="ECO:0000312" key="19">
    <source>
        <dbReference type="Proteomes" id="UP000001940"/>
    </source>
</evidence>
<evidence type="ECO:0000312" key="20">
    <source>
        <dbReference type="WormBase" id="K01G5.2a"/>
    </source>
</evidence>
<evidence type="ECO:0000312" key="21">
    <source>
        <dbReference type="WormBase" id="K01G5.2b"/>
    </source>
</evidence>
<evidence type="ECO:0000312" key="22">
    <source>
        <dbReference type="WormBase" id="K01G5.2c"/>
    </source>
</evidence>
<comment type="function">
    <text evidence="3 4 5 6 7 8 9 10 11 12 13 14">Seems to be involved in transcriptional silencing in heterochromatin-like complexes (PubMed:11850401). Probably does not act as global transcriptional repressor, instead targeting a subset of genes (PubMed:19064713, PubMed:22185090, PubMed:23028351, PubMed:25467431). Involved in RNA processing mediated by Tar DNA-binding protein homolog tdp-1 (PubMed:29760282). Plays a role in linking epigenetic regulation with the innate immune response (PubMed:22083954). Involved in the endoplasmic reticulum (ER) stress response via modulation of the unfolded protein response (UPR), acting mainly through the IRE1-XBP1 pathway and perhaps, to a lesser extent, through the autophagy pathway (PubMed:24715729). May act in a common pathway with retinoblastoma-like protein homolog lin-35 and zinc finger protein lin-13 to influence the ER stress response in the intestine (PubMed:24715729). Plays a role in the formation of the vulva and in fertility, acting together with a CoREST-like complex, and chromobox protein homolog hpl-1 (PubMed:11850401, PubMed:16890929, PubMed:16905130, PubMed:26476455). Acting in concert with hpl-1 and histone H1 protein his-24, involved in reproduction, somatic gonad development, male tail development and vulval cell fate specification; perhaps as a result of modulating expression of Hox genes mab-5 and egl-5 (PubMed:11850401, PubMed:16890929, PubMed:16905130, PubMed:19064713, PubMed:23028351). In vulval cell fate specification may act by repressing transcription, of EGF family gene lin-3 in hypodermal hyp7, and of homeobox lin-39 in vulval precursor cells (VPC) (PubMed:19064713). Role in growth and somatic gonad development is antagonized by histone-lysine N-methyltransferase set-2/SET1 (PubMed:17967446). Required for larval development, acting redundantly with hpl-1 (PubMed:16905130). Plays a role in regulation of the developmentally arrested larval state known as dauer, longevity, and lipid metabolism (PubMed:22185090).</text>
</comment>
<comment type="subunit">
    <text evidence="8 10 13 14">Interacts with histone H3 when di-, or tri-methylated at 'Lys-27' (H3K27me2/me3), or tri-methylated at 'Lys-9' (H3K9me3) (PubMed:23028351, PubMed:26476455). Interacts with Tar DNA-binding protein homolog tdp-1; interaction may maintain localization of hpl-2 to gene bodies (PubMed:29760282). Interacts with histone H1 his-24, probably via interaction with hpl-1 (PubMed:22083954). Interacts with chromobox protein homolog hpl-1 (PubMed:22083954).</text>
</comment>
<comment type="subunit">
    <molecule>Isoform a</molecule>
    <text evidence="4">May form homodimers (PubMed:16890929). Interacts (via chromo (shadow subtype) domain) with zinc finger protein lin-13 (via PLVPV motif); the interaction is direct and influences localization of hpl-2 to nuclear foci (PubMed:16890929).</text>
</comment>
<comment type="subcellular location">
    <subcellularLocation>
        <location evidence="3 4 5 12 13 14">Nucleus</location>
    </subcellularLocation>
    <subcellularLocation>
        <location evidence="3 4 5 12 13">Chromosome</location>
    </subcellularLocation>
    <text evidence="4 5 12 13 14">Localizes to distinct nuclear foci, not overlapping significantly with hpl-1, in embryonic cells (PubMed:16905130, PubMed:26476455). Localization to nuclear foci overlaps partially with zinc finger protein lin-13 (PubMed:16890929). Localizes to foci in a lin-13-dependent manner (PubMed:16890929). Localization along chromosomal arms correlates with localization of histone H3 methylated at 'Lys-9' (H3K9me), however, hpl-2 can associate with chromatin in an H3K9me-independent manner (PubMed:25467431). Localization on chromosome correlates with sequences enriched in repetitive elements, or in well-expressed genes (PubMed:25467431). Localized to gene bodies (PubMed:29760282).</text>
</comment>
<comment type="alternative products">
    <event type="alternative splicing"/>
    <isoform>
        <id>G5EDE2-1</id>
        <name evidence="20">a</name>
        <sequence type="displayed"/>
    </isoform>
    <isoform>
        <id>G5EDE2-2</id>
        <name evidence="21">b</name>
        <sequence type="described" ref="VSP_061516"/>
    </isoform>
    <isoform>
        <id>G5EDE2-3</id>
        <name evidence="22">c</name>
        <sequence type="described" ref="VSP_061517"/>
    </isoform>
</comment>
<comment type="developmental stage">
    <text evidence="3 5 7">Expressed in embryos at about the 20-50 cell stage (PubMed:11850401, PubMed:16905130). Expression persists throughout development and into adulthood (PubMed:11850401). Also expressed at lower level in germ cells, developing oocytes and embryos starting at the two-cell stage, before the onset of zygotic transcription, suggesting that the protein is maternally inherited (PubMed:11850401). Expressed in hyp7 hypodermal cells and vulval precursor cells of larval L2 stage hermaphrodites (PubMed:19064713).</text>
</comment>
<comment type="disruption phenotype">
    <text evidence="3 4 5 6 10 11 13 14">Causes ectopic up-regulation of transcription of specific genes, such as lin-39 and lag-2 (PubMed:16890929). Causes accumulation of double-stranded RNA transcripts (PubMed:29760282). Splicing defects (PubMed:29760282). Results in increased levels of spliced xbp-1 under basal conditions (PubMed:24715729). Increases survival in response to ER stress inducers tunicamycin or dithiothreitol (DTT), as compared to wild-type (PubMed:24715729). Knockout in a chromobox protein homolog hpl-1 mutant background has no effect on the distribution of monomethylated histone H3 'Lys-9' (H3K9me3) in chromatin (PubMed:26476455). Germline nuclei differ in size and morphology in a his-24 mutant background, probably as a result of altered chromatin compaction (PubMed:23028351). Causes defects in gonad elongation when grown at 25 degrees Celsius; phenotype exacerbated in an hpl-1 mutant background (PubMed:16905130). Causes vulva defects, infertility and larval lethality, in particular when grown at 25 degrees Celsius; exacerbated in various mutant backgrounds, such as hpl-1, or rcor-1 or his-24, or by simultaneous RNAi-mediated knockdown of lin-15A, or lin-9 or lin-35 (PubMed:16890929, PubMed:23028351, PubMed:26476455). Causes male tail defects in a his-24 mutant background (PubMed:23028351). Some knockout phenotypes are suppressed by simultaneous RNAi-mediated knockdown of histone-lysine N-methyltransferase set-2 (PubMed:17967446). RNAi-mediated knockdown causes sterility and vulval defects; sterility exacerbated by simultaneous RNAi-mediated knockdown of hpl-1. Defects in oocyte morphology, perhaps due to abnormal maturation (PubMed:11850401).</text>
</comment>